<organism>
    <name type="scientific">Baumannia cicadellinicola subsp. Homalodisca coagulata</name>
    <dbReference type="NCBI Taxonomy" id="374463"/>
    <lineage>
        <taxon>Bacteria</taxon>
        <taxon>Pseudomonadati</taxon>
        <taxon>Pseudomonadota</taxon>
        <taxon>Gammaproteobacteria</taxon>
        <taxon>Candidatus Palibaumannia</taxon>
    </lineage>
</organism>
<evidence type="ECO:0000255" key="1">
    <source>
        <dbReference type="HAMAP-Rule" id="MF_01306"/>
    </source>
</evidence>
<evidence type="ECO:0000305" key="2"/>
<accession>Q1LTB4</accession>
<dbReference type="EMBL" id="CP000238">
    <property type="protein sequence ID" value="ABF13841.1"/>
    <property type="molecule type" value="Genomic_DNA"/>
</dbReference>
<dbReference type="RefSeq" id="WP_011520533.1">
    <property type="nucleotide sequence ID" value="NC_007984.1"/>
</dbReference>
<dbReference type="SMR" id="Q1LTB4"/>
<dbReference type="STRING" id="374463.BCI_0352"/>
<dbReference type="KEGG" id="bci:BCI_0352"/>
<dbReference type="HOGENOM" id="CLU_092403_0_2_6"/>
<dbReference type="OrthoDB" id="9803672at2"/>
<dbReference type="Proteomes" id="UP000002427">
    <property type="component" value="Chromosome"/>
</dbReference>
<dbReference type="GO" id="GO:0015935">
    <property type="term" value="C:small ribosomal subunit"/>
    <property type="evidence" value="ECO:0007669"/>
    <property type="project" value="InterPro"/>
</dbReference>
<dbReference type="GO" id="GO:0019843">
    <property type="term" value="F:rRNA binding"/>
    <property type="evidence" value="ECO:0007669"/>
    <property type="project" value="UniProtKB-UniRule"/>
</dbReference>
<dbReference type="GO" id="GO:0003735">
    <property type="term" value="F:structural constituent of ribosome"/>
    <property type="evidence" value="ECO:0007669"/>
    <property type="project" value="InterPro"/>
</dbReference>
<dbReference type="GO" id="GO:0042274">
    <property type="term" value="P:ribosomal small subunit biogenesis"/>
    <property type="evidence" value="ECO:0007669"/>
    <property type="project" value="TreeGrafter"/>
</dbReference>
<dbReference type="GO" id="GO:0006412">
    <property type="term" value="P:translation"/>
    <property type="evidence" value="ECO:0007669"/>
    <property type="project" value="UniProtKB-UniRule"/>
</dbReference>
<dbReference type="CDD" id="cd00165">
    <property type="entry name" value="S4"/>
    <property type="match status" value="1"/>
</dbReference>
<dbReference type="FunFam" id="1.10.1050.10:FF:000001">
    <property type="entry name" value="30S ribosomal protein S4"/>
    <property type="match status" value="1"/>
</dbReference>
<dbReference type="FunFam" id="3.10.290.10:FF:000001">
    <property type="entry name" value="30S ribosomal protein S4"/>
    <property type="match status" value="1"/>
</dbReference>
<dbReference type="Gene3D" id="1.10.1050.10">
    <property type="entry name" value="Ribosomal Protein S4 Delta 41, Chain A, domain 1"/>
    <property type="match status" value="1"/>
</dbReference>
<dbReference type="Gene3D" id="3.10.290.10">
    <property type="entry name" value="RNA-binding S4 domain"/>
    <property type="match status" value="1"/>
</dbReference>
<dbReference type="HAMAP" id="MF_01306_B">
    <property type="entry name" value="Ribosomal_uS4_B"/>
    <property type="match status" value="1"/>
</dbReference>
<dbReference type="InterPro" id="IPR022801">
    <property type="entry name" value="Ribosomal_uS4"/>
</dbReference>
<dbReference type="InterPro" id="IPR005709">
    <property type="entry name" value="Ribosomal_uS4_bac-type"/>
</dbReference>
<dbReference type="InterPro" id="IPR018079">
    <property type="entry name" value="Ribosomal_uS4_CS"/>
</dbReference>
<dbReference type="InterPro" id="IPR001912">
    <property type="entry name" value="Ribosomal_uS4_N"/>
</dbReference>
<dbReference type="InterPro" id="IPR002942">
    <property type="entry name" value="S4_RNA-bd"/>
</dbReference>
<dbReference type="InterPro" id="IPR036986">
    <property type="entry name" value="S4_RNA-bd_sf"/>
</dbReference>
<dbReference type="NCBIfam" id="NF003717">
    <property type="entry name" value="PRK05327.1"/>
    <property type="match status" value="1"/>
</dbReference>
<dbReference type="NCBIfam" id="TIGR01017">
    <property type="entry name" value="rpsD_bact"/>
    <property type="match status" value="1"/>
</dbReference>
<dbReference type="PANTHER" id="PTHR11831">
    <property type="entry name" value="30S 40S RIBOSOMAL PROTEIN"/>
    <property type="match status" value="1"/>
</dbReference>
<dbReference type="PANTHER" id="PTHR11831:SF4">
    <property type="entry name" value="SMALL RIBOSOMAL SUBUNIT PROTEIN US4M"/>
    <property type="match status" value="1"/>
</dbReference>
<dbReference type="Pfam" id="PF00163">
    <property type="entry name" value="Ribosomal_S4"/>
    <property type="match status" value="1"/>
</dbReference>
<dbReference type="Pfam" id="PF01479">
    <property type="entry name" value="S4"/>
    <property type="match status" value="1"/>
</dbReference>
<dbReference type="SMART" id="SM01390">
    <property type="entry name" value="Ribosomal_S4"/>
    <property type="match status" value="1"/>
</dbReference>
<dbReference type="SMART" id="SM00363">
    <property type="entry name" value="S4"/>
    <property type="match status" value="1"/>
</dbReference>
<dbReference type="SUPFAM" id="SSF55174">
    <property type="entry name" value="Alpha-L RNA-binding motif"/>
    <property type="match status" value="1"/>
</dbReference>
<dbReference type="PROSITE" id="PS00632">
    <property type="entry name" value="RIBOSOMAL_S4"/>
    <property type="match status" value="1"/>
</dbReference>
<dbReference type="PROSITE" id="PS50889">
    <property type="entry name" value="S4"/>
    <property type="match status" value="1"/>
</dbReference>
<reference key="1">
    <citation type="journal article" date="2006" name="PLoS Biol.">
        <title>Metabolic complementarity and genomics of the dual bacterial symbiosis of sharpshooters.</title>
        <authorList>
            <person name="Wu D."/>
            <person name="Daugherty S.C."/>
            <person name="Van Aken S.E."/>
            <person name="Pai G.H."/>
            <person name="Watkins K.L."/>
            <person name="Khouri H."/>
            <person name="Tallon L.J."/>
            <person name="Zaborsky J.M."/>
            <person name="Dunbar H.E."/>
            <person name="Tran P.L."/>
            <person name="Moran N.A."/>
            <person name="Eisen J.A."/>
        </authorList>
    </citation>
    <scope>NUCLEOTIDE SEQUENCE [LARGE SCALE GENOMIC DNA]</scope>
</reference>
<gene>
    <name evidence="1" type="primary">rpsD</name>
    <name type="ordered locus">BCI_0352</name>
</gene>
<feature type="chain" id="PRO_0000293244" description="Small ribosomal subunit protein uS4">
    <location>
        <begin position="1"/>
        <end position="206"/>
    </location>
</feature>
<feature type="domain" description="S4 RNA-binding" evidence="1">
    <location>
        <begin position="96"/>
        <end position="168"/>
    </location>
</feature>
<proteinExistence type="inferred from homology"/>
<name>RS4_BAUCH</name>
<sequence>MARYLGPKLKMSRRENIDLFLKSGVRAIDSKCKIEQPPGQHGARKPRLSDYGLQLREKQKVRRIYGILERQFRNYYQEAARLKGNTGESLLQLLESRLDNVVYRMGFGATRAESRQLVSHKAIMVNNHIVNIASYQVAINDKISIRDKAKKQSRIRASLELAEQREKPTWLEVDIVKMEGIFKKIPERIHLSAHINEHMIVELYSK</sequence>
<protein>
    <recommendedName>
        <fullName evidence="1">Small ribosomal subunit protein uS4</fullName>
    </recommendedName>
    <alternativeName>
        <fullName evidence="2">30S ribosomal protein S4</fullName>
    </alternativeName>
</protein>
<comment type="function">
    <text evidence="1">One of the primary rRNA binding proteins, it binds directly to 16S rRNA where it nucleates assembly of the body of the 30S subunit.</text>
</comment>
<comment type="function">
    <text evidence="1">With S5 and S12 plays an important role in translational accuracy.</text>
</comment>
<comment type="subunit">
    <text evidence="1">Part of the 30S ribosomal subunit. Contacts protein S5. The interaction surface between S4 and S5 is involved in control of translational fidelity.</text>
</comment>
<comment type="similarity">
    <text evidence="1">Belongs to the universal ribosomal protein uS4 family.</text>
</comment>
<keyword id="KW-1185">Reference proteome</keyword>
<keyword id="KW-0687">Ribonucleoprotein</keyword>
<keyword id="KW-0689">Ribosomal protein</keyword>
<keyword id="KW-0694">RNA-binding</keyword>
<keyword id="KW-0699">rRNA-binding</keyword>